<organism>
    <name type="scientific">Methylibium petroleiphilum (strain ATCC BAA-1232 / LMG 22953 / PM1)</name>
    <dbReference type="NCBI Taxonomy" id="420662"/>
    <lineage>
        <taxon>Bacteria</taxon>
        <taxon>Pseudomonadati</taxon>
        <taxon>Pseudomonadota</taxon>
        <taxon>Betaproteobacteria</taxon>
        <taxon>Burkholderiales</taxon>
        <taxon>Sphaerotilaceae</taxon>
        <taxon>Methylibium</taxon>
    </lineage>
</organism>
<reference key="1">
    <citation type="journal article" date="2007" name="J. Bacteriol.">
        <title>Whole-genome analysis of the methyl tert-butyl ether-degrading beta-proteobacterium Methylibium petroleiphilum PM1.</title>
        <authorList>
            <person name="Kane S.R."/>
            <person name="Chakicherla A.Y."/>
            <person name="Chain P.S.G."/>
            <person name="Schmidt R."/>
            <person name="Shin M.W."/>
            <person name="Legler T.C."/>
            <person name="Scow K.M."/>
            <person name="Larimer F.W."/>
            <person name="Lucas S.M."/>
            <person name="Richardson P.M."/>
            <person name="Hristova K.R."/>
        </authorList>
    </citation>
    <scope>NUCLEOTIDE SEQUENCE [LARGE SCALE GENOMIC DNA]</scope>
    <source>
        <strain>ATCC BAA-1232 / LMG 22953 / PM1</strain>
    </source>
</reference>
<sequence length="363" mass="40526">MKHAPEPAHRHGGAERCAILLVNLGTPDEPSAPALRRYLAEFLSDPRVVEIPRAVWLPILHGVVLRVRPAKSAAKYASIWTAEGSPLKVWTEKQAKLLTGYLGERGHPVLVRAAMRYGQPSVATQLDALKADGATRILVLPLYPQYAAATTASVFDAVYAWAARTRRVPELRFVNHYHDDPGYILALGRCIEDHWMRNGRAERLVLSFHGVPERTLRLGDPYHCECQKTARLLTERLALKPEQVLVTFQSRFGKAKWLEPYTEPTLVQLAQQGIRRVDVACPGFTSDCLETLEEIAQEAREAYLHAGGETFHYIPCLNDRHEWIAALSDIAIRHLQGWPTQTAPDPAALQAQALRARQLGAQA</sequence>
<comment type="function">
    <text evidence="1">Catalyzes the ferrous insertion into protoporphyrin IX.</text>
</comment>
<comment type="catalytic activity">
    <reaction evidence="1">
        <text>heme b + 2 H(+) = protoporphyrin IX + Fe(2+)</text>
        <dbReference type="Rhea" id="RHEA:22584"/>
        <dbReference type="ChEBI" id="CHEBI:15378"/>
        <dbReference type="ChEBI" id="CHEBI:29033"/>
        <dbReference type="ChEBI" id="CHEBI:57306"/>
        <dbReference type="ChEBI" id="CHEBI:60344"/>
        <dbReference type="EC" id="4.98.1.1"/>
    </reaction>
</comment>
<comment type="pathway">
    <text evidence="1">Porphyrin-containing compound metabolism; protoheme biosynthesis; protoheme from protoporphyrin-IX: step 1/1.</text>
</comment>
<comment type="subcellular location">
    <subcellularLocation>
        <location evidence="1">Cytoplasm</location>
    </subcellularLocation>
</comment>
<comment type="similarity">
    <text evidence="1">Belongs to the ferrochelatase family.</text>
</comment>
<feature type="chain" id="PRO_1000059484" description="Ferrochelatase">
    <location>
        <begin position="1"/>
        <end position="363"/>
    </location>
</feature>
<feature type="binding site" evidence="1">
    <location>
        <position position="209"/>
    </location>
    <ligand>
        <name>Fe cation</name>
        <dbReference type="ChEBI" id="CHEBI:24875"/>
    </ligand>
</feature>
<feature type="binding site" evidence="1">
    <location>
        <position position="290"/>
    </location>
    <ligand>
        <name>Fe cation</name>
        <dbReference type="ChEBI" id="CHEBI:24875"/>
    </ligand>
</feature>
<proteinExistence type="inferred from homology"/>
<name>HEMH_METPP</name>
<accession>A2SIR1</accession>
<protein>
    <recommendedName>
        <fullName evidence="1">Ferrochelatase</fullName>
        <ecNumber evidence="1">4.98.1.1</ecNumber>
    </recommendedName>
    <alternativeName>
        <fullName evidence="1">Heme synthase</fullName>
    </alternativeName>
    <alternativeName>
        <fullName evidence="1">Protoheme ferro-lyase</fullName>
    </alternativeName>
</protein>
<gene>
    <name evidence="1" type="primary">hemH</name>
    <name type="ordered locus">Mpe_A2495</name>
</gene>
<evidence type="ECO:0000255" key="1">
    <source>
        <dbReference type="HAMAP-Rule" id="MF_00323"/>
    </source>
</evidence>
<keyword id="KW-0963">Cytoplasm</keyword>
<keyword id="KW-0350">Heme biosynthesis</keyword>
<keyword id="KW-0408">Iron</keyword>
<keyword id="KW-0456">Lyase</keyword>
<keyword id="KW-0479">Metal-binding</keyword>
<keyword id="KW-0627">Porphyrin biosynthesis</keyword>
<keyword id="KW-1185">Reference proteome</keyword>
<dbReference type="EC" id="4.98.1.1" evidence="1"/>
<dbReference type="EMBL" id="CP000555">
    <property type="protein sequence ID" value="ABM95450.1"/>
    <property type="molecule type" value="Genomic_DNA"/>
</dbReference>
<dbReference type="RefSeq" id="WP_011830083.1">
    <property type="nucleotide sequence ID" value="NC_008825.1"/>
</dbReference>
<dbReference type="SMR" id="A2SIR1"/>
<dbReference type="STRING" id="420662.Mpe_A2495"/>
<dbReference type="KEGG" id="mpt:Mpe_A2495"/>
<dbReference type="eggNOG" id="COG0276">
    <property type="taxonomic scope" value="Bacteria"/>
</dbReference>
<dbReference type="HOGENOM" id="CLU_018884_0_0_4"/>
<dbReference type="UniPathway" id="UPA00252">
    <property type="reaction ID" value="UER00325"/>
</dbReference>
<dbReference type="Proteomes" id="UP000000366">
    <property type="component" value="Chromosome"/>
</dbReference>
<dbReference type="GO" id="GO:0005737">
    <property type="term" value="C:cytoplasm"/>
    <property type="evidence" value="ECO:0007669"/>
    <property type="project" value="UniProtKB-SubCell"/>
</dbReference>
<dbReference type="GO" id="GO:0004325">
    <property type="term" value="F:ferrochelatase activity"/>
    <property type="evidence" value="ECO:0007669"/>
    <property type="project" value="UniProtKB-UniRule"/>
</dbReference>
<dbReference type="GO" id="GO:0046872">
    <property type="term" value="F:metal ion binding"/>
    <property type="evidence" value="ECO:0007669"/>
    <property type="project" value="UniProtKB-KW"/>
</dbReference>
<dbReference type="GO" id="GO:0006783">
    <property type="term" value="P:heme biosynthetic process"/>
    <property type="evidence" value="ECO:0007669"/>
    <property type="project" value="UniProtKB-UniRule"/>
</dbReference>
<dbReference type="CDD" id="cd00419">
    <property type="entry name" value="Ferrochelatase_C"/>
    <property type="match status" value="1"/>
</dbReference>
<dbReference type="CDD" id="cd03411">
    <property type="entry name" value="Ferrochelatase_N"/>
    <property type="match status" value="1"/>
</dbReference>
<dbReference type="FunFam" id="3.40.50.1400:FF:000002">
    <property type="entry name" value="Ferrochelatase"/>
    <property type="match status" value="1"/>
</dbReference>
<dbReference type="Gene3D" id="3.40.50.1400">
    <property type="match status" value="2"/>
</dbReference>
<dbReference type="HAMAP" id="MF_00323">
    <property type="entry name" value="Ferrochelatase"/>
    <property type="match status" value="1"/>
</dbReference>
<dbReference type="InterPro" id="IPR001015">
    <property type="entry name" value="Ferrochelatase"/>
</dbReference>
<dbReference type="InterPro" id="IPR019772">
    <property type="entry name" value="Ferrochelatase_AS"/>
</dbReference>
<dbReference type="InterPro" id="IPR033644">
    <property type="entry name" value="Ferrochelatase_C"/>
</dbReference>
<dbReference type="InterPro" id="IPR033659">
    <property type="entry name" value="Ferrochelatase_N"/>
</dbReference>
<dbReference type="NCBIfam" id="TIGR00109">
    <property type="entry name" value="hemH"/>
    <property type="match status" value="1"/>
</dbReference>
<dbReference type="PANTHER" id="PTHR11108">
    <property type="entry name" value="FERROCHELATASE"/>
    <property type="match status" value="1"/>
</dbReference>
<dbReference type="PANTHER" id="PTHR11108:SF1">
    <property type="entry name" value="FERROCHELATASE, MITOCHONDRIAL"/>
    <property type="match status" value="1"/>
</dbReference>
<dbReference type="Pfam" id="PF00762">
    <property type="entry name" value="Ferrochelatase"/>
    <property type="match status" value="1"/>
</dbReference>
<dbReference type="SUPFAM" id="SSF53800">
    <property type="entry name" value="Chelatase"/>
    <property type="match status" value="1"/>
</dbReference>
<dbReference type="PROSITE" id="PS00534">
    <property type="entry name" value="FERROCHELATASE"/>
    <property type="match status" value="1"/>
</dbReference>